<gene>
    <name evidence="1" type="primary">rfcS</name>
    <name type="ordered locus">Saci_0907</name>
</gene>
<dbReference type="EMBL" id="CP000077">
    <property type="protein sequence ID" value="AAY80270.1"/>
    <property type="molecule type" value="Genomic_DNA"/>
</dbReference>
<dbReference type="RefSeq" id="WP_011277772.1">
    <property type="nucleotide sequence ID" value="NC_007181.1"/>
</dbReference>
<dbReference type="SMR" id="Q4JAB0"/>
<dbReference type="STRING" id="330779.Saci_0907"/>
<dbReference type="GeneID" id="14551418"/>
<dbReference type="KEGG" id="sai:Saci_0907"/>
<dbReference type="PATRIC" id="fig|330779.12.peg.867"/>
<dbReference type="eggNOG" id="arCOG00469">
    <property type="taxonomic scope" value="Archaea"/>
</dbReference>
<dbReference type="HOGENOM" id="CLU_042324_2_1_2"/>
<dbReference type="Proteomes" id="UP000001018">
    <property type="component" value="Chromosome"/>
</dbReference>
<dbReference type="GO" id="GO:0005663">
    <property type="term" value="C:DNA replication factor C complex"/>
    <property type="evidence" value="ECO:0007669"/>
    <property type="project" value="InterPro"/>
</dbReference>
<dbReference type="GO" id="GO:0005524">
    <property type="term" value="F:ATP binding"/>
    <property type="evidence" value="ECO:0007669"/>
    <property type="project" value="UniProtKB-UniRule"/>
</dbReference>
<dbReference type="GO" id="GO:0016887">
    <property type="term" value="F:ATP hydrolysis activity"/>
    <property type="evidence" value="ECO:0007669"/>
    <property type="project" value="InterPro"/>
</dbReference>
<dbReference type="GO" id="GO:0003677">
    <property type="term" value="F:DNA binding"/>
    <property type="evidence" value="ECO:0007669"/>
    <property type="project" value="InterPro"/>
</dbReference>
<dbReference type="GO" id="GO:0003689">
    <property type="term" value="F:DNA clamp loader activity"/>
    <property type="evidence" value="ECO:0007669"/>
    <property type="project" value="UniProtKB-UniRule"/>
</dbReference>
<dbReference type="GO" id="GO:0006281">
    <property type="term" value="P:DNA repair"/>
    <property type="evidence" value="ECO:0007669"/>
    <property type="project" value="TreeGrafter"/>
</dbReference>
<dbReference type="GO" id="GO:0006261">
    <property type="term" value="P:DNA-templated DNA replication"/>
    <property type="evidence" value="ECO:0007669"/>
    <property type="project" value="TreeGrafter"/>
</dbReference>
<dbReference type="CDD" id="cd00009">
    <property type="entry name" value="AAA"/>
    <property type="match status" value="1"/>
</dbReference>
<dbReference type="CDD" id="cd18140">
    <property type="entry name" value="HLD_clamp_RFC"/>
    <property type="match status" value="1"/>
</dbReference>
<dbReference type="FunFam" id="1.20.272.10:FF:000029">
    <property type="entry name" value="Replication factor C small subunit"/>
    <property type="match status" value="1"/>
</dbReference>
<dbReference type="FunFam" id="3.40.50.300:FF:000129">
    <property type="entry name" value="Replication factor C subunit 5"/>
    <property type="match status" value="1"/>
</dbReference>
<dbReference type="Gene3D" id="1.10.8.60">
    <property type="match status" value="1"/>
</dbReference>
<dbReference type="Gene3D" id="1.20.272.10">
    <property type="match status" value="1"/>
</dbReference>
<dbReference type="Gene3D" id="3.40.50.300">
    <property type="entry name" value="P-loop containing nucleotide triphosphate hydrolases"/>
    <property type="match status" value="1"/>
</dbReference>
<dbReference type="HAMAP" id="MF_01509">
    <property type="entry name" value="RfcS"/>
    <property type="match status" value="1"/>
</dbReference>
<dbReference type="InterPro" id="IPR003593">
    <property type="entry name" value="AAA+_ATPase"/>
</dbReference>
<dbReference type="InterPro" id="IPR003959">
    <property type="entry name" value="ATPase_AAA_core"/>
</dbReference>
<dbReference type="InterPro" id="IPR008921">
    <property type="entry name" value="DNA_pol3_clamp-load_cplx_C"/>
</dbReference>
<dbReference type="InterPro" id="IPR050238">
    <property type="entry name" value="DNA_Rep/Repair_Clamp_Loader"/>
</dbReference>
<dbReference type="InterPro" id="IPR027417">
    <property type="entry name" value="P-loop_NTPase"/>
</dbReference>
<dbReference type="InterPro" id="IPR023748">
    <property type="entry name" value="Rep_factor-C_ssu_arc"/>
</dbReference>
<dbReference type="InterPro" id="IPR013748">
    <property type="entry name" value="Rep_factorC_C"/>
</dbReference>
<dbReference type="InterPro" id="IPR047854">
    <property type="entry name" value="RFC_lid"/>
</dbReference>
<dbReference type="NCBIfam" id="NF001679">
    <property type="entry name" value="PRK00440.1"/>
    <property type="match status" value="1"/>
</dbReference>
<dbReference type="PANTHER" id="PTHR11669">
    <property type="entry name" value="REPLICATION FACTOR C / DNA POLYMERASE III GAMMA-TAU SUBUNIT"/>
    <property type="match status" value="1"/>
</dbReference>
<dbReference type="PANTHER" id="PTHR11669:SF20">
    <property type="entry name" value="REPLICATION FACTOR C SUBUNIT 4"/>
    <property type="match status" value="1"/>
</dbReference>
<dbReference type="Pfam" id="PF00004">
    <property type="entry name" value="AAA"/>
    <property type="match status" value="1"/>
</dbReference>
<dbReference type="Pfam" id="PF08542">
    <property type="entry name" value="Rep_fac_C"/>
    <property type="match status" value="1"/>
</dbReference>
<dbReference type="SMART" id="SM00382">
    <property type="entry name" value="AAA"/>
    <property type="match status" value="1"/>
</dbReference>
<dbReference type="SUPFAM" id="SSF52540">
    <property type="entry name" value="P-loop containing nucleoside triphosphate hydrolases"/>
    <property type="match status" value="1"/>
</dbReference>
<dbReference type="SUPFAM" id="SSF48019">
    <property type="entry name" value="post-AAA+ oligomerization domain-like"/>
    <property type="match status" value="1"/>
</dbReference>
<evidence type="ECO:0000255" key="1">
    <source>
        <dbReference type="HAMAP-Rule" id="MF_01509"/>
    </source>
</evidence>
<name>RFCS_SULAC</name>
<comment type="function">
    <text evidence="1">Part of the RFC clamp loader complex which loads the PCNA sliding clamp onto DNA.</text>
</comment>
<comment type="subunit">
    <text evidence="1">Heteromultimer composed of small subunits (RfcS) and large subunits (RfcL).</text>
</comment>
<comment type="similarity">
    <text evidence="1">Belongs to the activator 1 small subunits family. RfcS subfamily.</text>
</comment>
<organism>
    <name type="scientific">Sulfolobus acidocaldarius (strain ATCC 33909 / DSM 639 / JCM 8929 / NBRC 15157 / NCIMB 11770)</name>
    <dbReference type="NCBI Taxonomy" id="330779"/>
    <lineage>
        <taxon>Archaea</taxon>
        <taxon>Thermoproteota</taxon>
        <taxon>Thermoprotei</taxon>
        <taxon>Sulfolobales</taxon>
        <taxon>Sulfolobaceae</taxon>
        <taxon>Sulfolobus</taxon>
    </lineage>
</organism>
<protein>
    <recommendedName>
        <fullName evidence="1">Replication factor C small subunit</fullName>
        <shortName evidence="1">RFC small subunit</shortName>
    </recommendedName>
    <alternativeName>
        <fullName evidence="1">Clamp loader small subunit</fullName>
    </alternativeName>
</protein>
<reference key="1">
    <citation type="journal article" date="2005" name="J. Bacteriol.">
        <title>The genome of Sulfolobus acidocaldarius, a model organism of the Crenarchaeota.</title>
        <authorList>
            <person name="Chen L."/>
            <person name="Bruegger K."/>
            <person name="Skovgaard M."/>
            <person name="Redder P."/>
            <person name="She Q."/>
            <person name="Torarinsson E."/>
            <person name="Greve B."/>
            <person name="Awayez M."/>
            <person name="Zibat A."/>
            <person name="Klenk H.-P."/>
            <person name="Garrett R.A."/>
        </authorList>
    </citation>
    <scope>NUCLEOTIDE SEQUENCE [LARGE SCALE GENOMIC DNA]</scope>
    <source>
        <strain>ATCC 33909 / DSM 639 / JCM 8929 / NBRC 15157 / NCIMB 11770</strain>
    </source>
</reference>
<sequence length="325" mass="37015">MEEEILWAEKYRPKSLDEIVNQKEIVERLKKFVKEKNMPHLLFAGPPGTGKTTAALALVRDLYGNNYRQYFLELNASDERGIDVIRNKVKEFARTVASNNVPFKVILLDEADNMTADAQQALRRTMELYTETTRFILACNYLSKIIEPIQSRTALFRFYPLKKEDVVNRLIQIAKNEKVEFDPKGIETIFDITQGDMRKAINVIQAASAYGKITVETVYKVLGLAQPKEIREMLHLALSGKFLQARDKLRELLINYGLSGEDIIKQVHKELTGNEISIPDDLKVILVDYAGEVEFRIMEGADDEIQLSAFLAKLALHAEKYSGGK</sequence>
<proteinExistence type="inferred from homology"/>
<feature type="chain" id="PRO_0000135983" description="Replication factor C small subunit">
    <location>
        <begin position="1"/>
        <end position="325"/>
    </location>
</feature>
<feature type="binding site" evidence="1">
    <location>
        <begin position="45"/>
        <end position="52"/>
    </location>
    <ligand>
        <name>ATP</name>
        <dbReference type="ChEBI" id="CHEBI:30616"/>
    </ligand>
</feature>
<keyword id="KW-0067">ATP-binding</keyword>
<keyword id="KW-0235">DNA replication</keyword>
<keyword id="KW-0547">Nucleotide-binding</keyword>
<keyword id="KW-1185">Reference proteome</keyword>
<accession>Q4JAB0</accession>